<organism>
    <name type="scientific">Halobacterium salinarum (strain ATCC 29341 / DSM 671 / R1)</name>
    <dbReference type="NCBI Taxonomy" id="478009"/>
    <lineage>
        <taxon>Archaea</taxon>
        <taxon>Methanobacteriati</taxon>
        <taxon>Methanobacteriota</taxon>
        <taxon>Stenosarchaea group</taxon>
        <taxon>Halobacteria</taxon>
        <taxon>Halobacteriales</taxon>
        <taxon>Halobacteriaceae</taxon>
        <taxon>Halobacterium</taxon>
        <taxon>Halobacterium salinarum NRC-34001</taxon>
    </lineage>
</organism>
<protein>
    <recommendedName>
        <fullName>Protoheme IX farnesyltransferase</fullName>
        <ecNumber>2.5.1.141</ecNumber>
    </recommendedName>
    <alternativeName>
        <fullName>Heme B farnesyltransferase</fullName>
    </alternativeName>
    <alternativeName>
        <fullName>Heme O synthase</fullName>
    </alternativeName>
</protein>
<comment type="function">
    <text evidence="1">Converts heme B (protoheme IX) to heme O by substitution of the vinyl group on carbon 2 of heme B porphyrin ring with a hydroxyethyl farnesyl side group.</text>
</comment>
<comment type="catalytic activity">
    <reaction>
        <text>heme b + (2E,6E)-farnesyl diphosphate + H2O = Fe(II)-heme o + diphosphate</text>
        <dbReference type="Rhea" id="RHEA:28070"/>
        <dbReference type="ChEBI" id="CHEBI:15377"/>
        <dbReference type="ChEBI" id="CHEBI:33019"/>
        <dbReference type="ChEBI" id="CHEBI:60344"/>
        <dbReference type="ChEBI" id="CHEBI:60530"/>
        <dbReference type="ChEBI" id="CHEBI:175763"/>
        <dbReference type="EC" id="2.5.1.141"/>
    </reaction>
</comment>
<comment type="pathway">
    <text>Porphyrin-containing compound metabolism; heme O biosynthesis; heme O from protoheme: step 1/1.</text>
</comment>
<comment type="subcellular location">
    <subcellularLocation>
        <location evidence="3">Cell membrane</location>
        <topology evidence="3">Multi-pass membrane protein</topology>
    </subcellularLocation>
</comment>
<comment type="miscellaneous">
    <text evidence="1">Carbon 2 of the heme B porphyrin ring is defined according to the Fischer nomenclature.</text>
</comment>
<comment type="similarity">
    <text evidence="3">In the C-terminal section; belongs to the UbiA prenyltransferase family. Protoheme IX farnesyltransferase subfamily.</text>
</comment>
<feature type="chain" id="PRO_0000346098" description="Protoheme IX farnesyltransferase">
    <location>
        <begin position="1"/>
        <end position="459"/>
    </location>
</feature>
<feature type="transmembrane region" description="Helical" evidence="2">
    <location>
        <begin position="9"/>
        <end position="29"/>
    </location>
</feature>
<feature type="transmembrane region" description="Helical" evidence="2">
    <location>
        <begin position="66"/>
        <end position="86"/>
    </location>
</feature>
<feature type="transmembrane region" description="Helical" evidence="2">
    <location>
        <begin position="93"/>
        <end position="113"/>
    </location>
</feature>
<feature type="transmembrane region" description="Helical" evidence="2">
    <location>
        <begin position="123"/>
        <end position="143"/>
    </location>
</feature>
<feature type="transmembrane region" description="Helical" evidence="2">
    <location>
        <begin position="184"/>
        <end position="204"/>
    </location>
</feature>
<feature type="transmembrane region" description="Helical" evidence="2">
    <location>
        <begin position="211"/>
        <end position="231"/>
    </location>
</feature>
<feature type="transmembrane region" description="Helical" evidence="2">
    <location>
        <begin position="262"/>
        <end position="282"/>
    </location>
</feature>
<feature type="transmembrane region" description="Helical" evidence="2">
    <location>
        <begin position="284"/>
        <end position="304"/>
    </location>
</feature>
<feature type="transmembrane region" description="Helical" evidence="2">
    <location>
        <begin position="325"/>
        <end position="345"/>
    </location>
</feature>
<feature type="transmembrane region" description="Helical" evidence="2">
    <location>
        <begin position="382"/>
        <end position="402"/>
    </location>
</feature>
<feature type="transmembrane region" description="Helical" evidence="2">
    <location>
        <begin position="403"/>
        <end position="423"/>
    </location>
</feature>
<feature type="transmembrane region" description="Helical" evidence="2">
    <location>
        <begin position="438"/>
        <end position="458"/>
    </location>
</feature>
<feature type="region of interest" description="Unknown">
    <location>
        <begin position="1"/>
        <end position="184"/>
    </location>
</feature>
<feature type="region of interest" description="Protoheme IX prenyltransferase">
    <location>
        <begin position="185"/>
        <end position="459"/>
    </location>
</feature>
<evidence type="ECO:0000250" key="1"/>
<evidence type="ECO:0000255" key="2"/>
<evidence type="ECO:0000305" key="3"/>
<sequence length="459" mass="47832">MSRNTATQFVAVLAAAAMGVYSLLVLGATTSLTGAASACQTWPSCNGQWFALQSLDLVVVWGHRTAAALTGLAVVGAAVLAWRTGASRRVRTAVTLALALYPVQVVIGAYTAMSAGAAPFTGVHLTLGVGIFASLVVALAWTLDAQTGDLPSAEWEGEPRHTDDGDPTQPGIVRAYVQLMKPRLMWLLCLVAGAGMALASSQLGAGQQLSAATVVLTLGGGVLSIGASGTFNHVLEREQDEKMARTDDRPVVTDRIPPRNALAFGVVLGVASLAAFAAVNLLTAVLGLTAIAFYSIVYTLVLKPNTRQSTVIGGAAGALPALIGWVAVTGAVGVGGVVLAGVIFLWTPAHFYNLALAYKDDYERGGFPLMPVVEGEAKTRRHIVYYIGATLASAVVLAELTGLGPLYAATTVLLGAVFLYFAIRLHRERDRRAAMRSFHASNAYLGCLLVAVVLDTMVV</sequence>
<keyword id="KW-1003">Cell membrane</keyword>
<keyword id="KW-0350">Heme biosynthesis</keyword>
<keyword id="KW-0472">Membrane</keyword>
<keyword id="KW-0808">Transferase</keyword>
<keyword id="KW-0812">Transmembrane</keyword>
<keyword id="KW-1133">Transmembrane helix</keyword>
<gene>
    <name type="primary">ctaB</name>
    <name type="ordered locus">OE_1989F</name>
</gene>
<dbReference type="EC" id="2.5.1.141"/>
<dbReference type="EMBL" id="AM774415">
    <property type="protein sequence ID" value="CAP13429.1"/>
    <property type="molecule type" value="Genomic_DNA"/>
</dbReference>
<dbReference type="SMR" id="B0R3W4"/>
<dbReference type="EnsemblBacteria" id="CAP13429">
    <property type="protein sequence ID" value="CAP13429"/>
    <property type="gene ID" value="OE_1989F"/>
</dbReference>
<dbReference type="KEGG" id="hsl:OE_1989F"/>
<dbReference type="HOGENOM" id="CLU_030009_1_1_2"/>
<dbReference type="PhylomeDB" id="B0R3W4"/>
<dbReference type="UniPathway" id="UPA00834">
    <property type="reaction ID" value="UER00712"/>
</dbReference>
<dbReference type="Proteomes" id="UP000001321">
    <property type="component" value="Chromosome"/>
</dbReference>
<dbReference type="GO" id="GO:0005886">
    <property type="term" value="C:plasma membrane"/>
    <property type="evidence" value="ECO:0007669"/>
    <property type="project" value="UniProtKB-SubCell"/>
</dbReference>
<dbReference type="GO" id="GO:0008495">
    <property type="term" value="F:protoheme IX farnesyltransferase activity"/>
    <property type="evidence" value="ECO:0007669"/>
    <property type="project" value="UniProtKB-UniRule"/>
</dbReference>
<dbReference type="GO" id="GO:0048034">
    <property type="term" value="P:heme O biosynthetic process"/>
    <property type="evidence" value="ECO:0007669"/>
    <property type="project" value="UniProtKB-UniRule"/>
</dbReference>
<dbReference type="CDD" id="cd13957">
    <property type="entry name" value="PT_UbiA_Cox10"/>
    <property type="match status" value="1"/>
</dbReference>
<dbReference type="Gene3D" id="1.10.357.140">
    <property type="entry name" value="UbiA prenyltransferase"/>
    <property type="match status" value="1"/>
</dbReference>
<dbReference type="Gene3D" id="1.20.120.1780">
    <property type="entry name" value="UbiA prenyltransferase"/>
    <property type="match status" value="1"/>
</dbReference>
<dbReference type="HAMAP" id="MF_00154">
    <property type="entry name" value="CyoE_CtaB"/>
    <property type="match status" value="1"/>
</dbReference>
<dbReference type="InterPro" id="IPR006369">
    <property type="entry name" value="Protohaem_IX_farnesylTrfase"/>
</dbReference>
<dbReference type="InterPro" id="IPR000537">
    <property type="entry name" value="UbiA_prenyltransferase"/>
</dbReference>
<dbReference type="InterPro" id="IPR044878">
    <property type="entry name" value="UbiA_sf"/>
</dbReference>
<dbReference type="NCBIfam" id="TIGR01473">
    <property type="entry name" value="cyoE_ctaB"/>
    <property type="match status" value="1"/>
</dbReference>
<dbReference type="NCBIfam" id="NF003349">
    <property type="entry name" value="PRK04375.1-2"/>
    <property type="match status" value="1"/>
</dbReference>
<dbReference type="PANTHER" id="PTHR43448">
    <property type="entry name" value="PROTOHEME IX FARNESYLTRANSFERASE, MITOCHONDRIAL"/>
    <property type="match status" value="1"/>
</dbReference>
<dbReference type="PANTHER" id="PTHR43448:SF2">
    <property type="entry name" value="PROTOHEME IX FARNESYLTRANSFERASE, MITOCHONDRIAL"/>
    <property type="match status" value="1"/>
</dbReference>
<dbReference type="Pfam" id="PF01040">
    <property type="entry name" value="UbiA"/>
    <property type="match status" value="1"/>
</dbReference>
<proteinExistence type="inferred from homology"/>
<reference key="1">
    <citation type="journal article" date="2008" name="Genomics">
        <title>Evolution in the laboratory: the genome of Halobacterium salinarum strain R1 compared to that of strain NRC-1.</title>
        <authorList>
            <person name="Pfeiffer F."/>
            <person name="Schuster S.C."/>
            <person name="Broicher A."/>
            <person name="Falb M."/>
            <person name="Palm P."/>
            <person name="Rodewald K."/>
            <person name="Ruepp A."/>
            <person name="Soppa J."/>
            <person name="Tittor J."/>
            <person name="Oesterhelt D."/>
        </authorList>
    </citation>
    <scope>NUCLEOTIDE SEQUENCE [LARGE SCALE GENOMIC DNA]</scope>
    <source>
        <strain>ATCC 29341 / DSM 671 / R1</strain>
    </source>
</reference>
<name>COXX_HALS3</name>
<accession>B0R3W4</accession>